<reference evidence="5" key="1">
    <citation type="journal article" date="2003" name="PLoS Biol.">
        <title>The genome sequence of Caenorhabditis briggsae: a platform for comparative genomics.</title>
        <authorList>
            <person name="Stein L.D."/>
            <person name="Bao Z."/>
            <person name="Blasiar D."/>
            <person name="Blumenthal T."/>
            <person name="Brent M.R."/>
            <person name="Chen N."/>
            <person name="Chinwalla A."/>
            <person name="Clarke L."/>
            <person name="Clee C."/>
            <person name="Coghlan A."/>
            <person name="Coulson A."/>
            <person name="D'Eustachio P."/>
            <person name="Fitch D.H.A."/>
            <person name="Fulton L.A."/>
            <person name="Fulton R.E."/>
            <person name="Griffiths-Jones S."/>
            <person name="Harris T.W."/>
            <person name="Hillier L.W."/>
            <person name="Kamath R."/>
            <person name="Kuwabara P.E."/>
            <person name="Mardis E.R."/>
            <person name="Marra M.A."/>
            <person name="Miner T.L."/>
            <person name="Minx P."/>
            <person name="Mullikin J.C."/>
            <person name="Plumb R.W."/>
            <person name="Rogers J."/>
            <person name="Schein J.E."/>
            <person name="Sohrmann M."/>
            <person name="Spieth J."/>
            <person name="Stajich J.E."/>
            <person name="Wei C."/>
            <person name="Willey D."/>
            <person name="Wilson R.K."/>
            <person name="Durbin R.M."/>
            <person name="Waterston R.H."/>
        </authorList>
    </citation>
    <scope>NUCLEOTIDE SEQUENCE [LARGE SCALE GENOMIC DNA]</scope>
    <source>
        <strain evidence="5">AF16</strain>
    </source>
</reference>
<proteinExistence type="inferred from homology"/>
<feature type="chain" id="PRO_0000324670" description="Beta-1,4-N-acetylgalactosaminyltransferase bre-4">
    <location>
        <begin position="1"/>
        <end position="384"/>
    </location>
</feature>
<feature type="topological domain" description="Cytoplasmic" evidence="4">
    <location>
        <begin position="1"/>
        <end position="12"/>
    </location>
</feature>
<feature type="transmembrane region" description="Helical; Signal-anchor for type II membrane protein">
    <location>
        <begin position="13"/>
        <end position="35"/>
    </location>
</feature>
<feature type="topological domain" description="Extracellular" evidence="4">
    <location>
        <begin position="36"/>
        <end position="384"/>
    </location>
</feature>
<feature type="binding site" evidence="2">
    <location>
        <position position="223"/>
    </location>
    <ligand>
        <name>Mn(2+)</name>
        <dbReference type="ChEBI" id="CHEBI:29035"/>
    </ligand>
</feature>
<feature type="binding site" evidence="2">
    <location>
        <position position="316"/>
    </location>
    <ligand>
        <name>Mn(2+)</name>
        <dbReference type="ChEBI" id="CHEBI:29035"/>
    </ligand>
</feature>
<feature type="glycosylation site" description="N-linked (GlcNAc...) asparagine" evidence="4">
    <location>
        <position position="37"/>
    </location>
</feature>
<feature type="glycosylation site" description="N-linked (GlcNAc...) asparagine" evidence="4">
    <location>
        <position position="71"/>
    </location>
</feature>
<feature type="glycosylation site" description="N-linked (GlcNAc...) asparagine" evidence="4">
    <location>
        <position position="81"/>
    </location>
</feature>
<feature type="glycosylation site" description="N-linked (GlcNAc...) asparagine" evidence="4">
    <location>
        <position position="98"/>
    </location>
</feature>
<feature type="glycosylation site" description="N-linked (GlcNAc...) asparagine" evidence="4">
    <location>
        <position position="192"/>
    </location>
</feature>
<feature type="disulfide bond" evidence="2">
    <location>
        <begin position="104"/>
        <end position="145"/>
    </location>
</feature>
<feature type="disulfide bond" evidence="2">
    <location>
        <begin position="216"/>
        <end position="235"/>
    </location>
</feature>
<dbReference type="EC" id="2.4.1.-"/>
<dbReference type="EMBL" id="HE601428">
    <property type="protein sequence ID" value="CAP38817.1"/>
    <property type="molecule type" value="Genomic_DNA"/>
</dbReference>
<dbReference type="SMR" id="A8Y1P7"/>
<dbReference type="FunCoup" id="A8Y1P7">
    <property type="interactions" value="2167"/>
</dbReference>
<dbReference type="STRING" id="6238.A8Y1P7"/>
<dbReference type="GlyCosmos" id="A8Y1P7">
    <property type="glycosylation" value="5 sites, No reported glycans"/>
</dbReference>
<dbReference type="EnsemblMetazoa" id="CBG22165.1">
    <property type="protein sequence ID" value="CBG22165.1"/>
    <property type="gene ID" value="WBGene00040787"/>
</dbReference>
<dbReference type="KEGG" id="cbr:CBG_22165"/>
<dbReference type="CTD" id="8580934"/>
<dbReference type="WormBase" id="CBG22165">
    <property type="protein sequence ID" value="CBP05300"/>
    <property type="gene ID" value="WBGene00040787"/>
    <property type="gene designation" value="Cbr-bre-4"/>
</dbReference>
<dbReference type="eggNOG" id="KOG3916">
    <property type="taxonomic scope" value="Eukaryota"/>
</dbReference>
<dbReference type="HOGENOM" id="CLU_044391_3_1_1"/>
<dbReference type="InParanoid" id="A8Y1P7"/>
<dbReference type="OMA" id="GLHAMAP"/>
<dbReference type="OrthoDB" id="10038994at2759"/>
<dbReference type="UniPathway" id="UPA00378"/>
<dbReference type="Proteomes" id="UP000008549">
    <property type="component" value="Unassembled WGS sequence"/>
</dbReference>
<dbReference type="GO" id="GO:0005794">
    <property type="term" value="C:Golgi apparatus"/>
    <property type="evidence" value="ECO:0000318"/>
    <property type="project" value="GO_Central"/>
</dbReference>
<dbReference type="GO" id="GO:0016020">
    <property type="term" value="C:membrane"/>
    <property type="evidence" value="ECO:0007669"/>
    <property type="project" value="UniProtKB-SubCell"/>
</dbReference>
<dbReference type="GO" id="GO:0046872">
    <property type="term" value="F:metal ion binding"/>
    <property type="evidence" value="ECO:0007669"/>
    <property type="project" value="UniProtKB-KW"/>
</dbReference>
<dbReference type="GO" id="GO:0033842">
    <property type="term" value="F:N-acetyl-beta-glucosaminyl-derivative 4-beta-N-acetylgalactosaminyltransferase activity"/>
    <property type="evidence" value="ECO:0000318"/>
    <property type="project" value="GO_Central"/>
</dbReference>
<dbReference type="GO" id="GO:0005975">
    <property type="term" value="P:carbohydrate metabolic process"/>
    <property type="evidence" value="ECO:0007669"/>
    <property type="project" value="InterPro"/>
</dbReference>
<dbReference type="GO" id="GO:0006688">
    <property type="term" value="P:glycosphingolipid biosynthetic process"/>
    <property type="evidence" value="ECO:0000318"/>
    <property type="project" value="GO_Central"/>
</dbReference>
<dbReference type="GO" id="GO:0045747">
    <property type="term" value="P:positive regulation of Notch signaling pathway"/>
    <property type="evidence" value="ECO:0007669"/>
    <property type="project" value="EnsemblMetazoa"/>
</dbReference>
<dbReference type="GO" id="GO:0006486">
    <property type="term" value="P:protein glycosylation"/>
    <property type="evidence" value="ECO:0000318"/>
    <property type="project" value="GO_Central"/>
</dbReference>
<dbReference type="GO" id="GO:0009636">
    <property type="term" value="P:response to toxic substance"/>
    <property type="evidence" value="ECO:0007669"/>
    <property type="project" value="EnsemblMetazoa"/>
</dbReference>
<dbReference type="CDD" id="cd00899">
    <property type="entry name" value="b4GalT"/>
    <property type="match status" value="1"/>
</dbReference>
<dbReference type="FunFam" id="3.90.550.10:FF:000037">
    <property type="entry name" value="Beta-1,4-galactosyltransferase 6"/>
    <property type="match status" value="1"/>
</dbReference>
<dbReference type="Gene3D" id="3.90.550.10">
    <property type="entry name" value="Spore Coat Polysaccharide Biosynthesis Protein SpsA, Chain A"/>
    <property type="match status" value="1"/>
</dbReference>
<dbReference type="InterPro" id="IPR003859">
    <property type="entry name" value="Galactosyl_T"/>
</dbReference>
<dbReference type="InterPro" id="IPR027791">
    <property type="entry name" value="Galactosyl_T_C"/>
</dbReference>
<dbReference type="InterPro" id="IPR027995">
    <property type="entry name" value="Galactosyl_T_N"/>
</dbReference>
<dbReference type="InterPro" id="IPR029044">
    <property type="entry name" value="Nucleotide-diphossugar_trans"/>
</dbReference>
<dbReference type="PANTHER" id="PTHR19300">
    <property type="entry name" value="BETA-1,4-GALACTOSYLTRANSFERASE"/>
    <property type="match status" value="1"/>
</dbReference>
<dbReference type="PANTHER" id="PTHR19300:SF57">
    <property type="entry name" value="BETA-1,4-N-ACETYLGALACTOSAMINYLTRANSFERASE"/>
    <property type="match status" value="1"/>
</dbReference>
<dbReference type="Pfam" id="PF02709">
    <property type="entry name" value="Glyco_transf_7C"/>
    <property type="match status" value="1"/>
</dbReference>
<dbReference type="Pfam" id="PF13733">
    <property type="entry name" value="Glyco_transf_7N"/>
    <property type="match status" value="1"/>
</dbReference>
<dbReference type="PRINTS" id="PR02050">
    <property type="entry name" value="B14GALTRFASE"/>
</dbReference>
<dbReference type="SUPFAM" id="SSF53448">
    <property type="entry name" value="Nucleotide-diphospho-sugar transferases"/>
    <property type="match status" value="1"/>
</dbReference>
<sequence>MAFRHLASAKLKTFFVLCAALLLVHAMIYKVPSLYENFSIGSSTLIADVDAMEAVLGNTASTSDDPFDVWNSTFSPISEVNQTAFMEDIRPILFGDANETRPHCNQTPPHLVGPIRVFLDEPDFATLEKIYPETHPGGHGIPTECVARHRVAIIVPYRDREAHLRIMLHNLHSLLAKQQLDYAIFVVEQVANQTFNRGKLMNVGYDVASRLYPWQCFIFHDVDLLPEDDRNLYTCPIQPRHMSVAIDKFHYKLPYSAIFGGISALTQEHVKAINGFSNDFWGWGGEDDDLATRTSQAGLKVSRYPAQIARYKMIKHSTEATNPVNKCRYKIMGQTKRRWKTDGLSSLKYKLVKLELKPLYTRAVVDLLEKECRRELRRDFPTCF</sequence>
<name>BRE4_CAEBR</name>
<evidence type="ECO:0000250" key="1"/>
<evidence type="ECO:0000250" key="2">
    <source>
        <dbReference type="UniProtKB" id="P08037"/>
    </source>
</evidence>
<evidence type="ECO:0000250" key="3">
    <source>
        <dbReference type="UniProtKB" id="Q9GUM2"/>
    </source>
</evidence>
<evidence type="ECO:0000255" key="4"/>
<evidence type="ECO:0000312" key="5">
    <source>
        <dbReference type="EMBL" id="CAP38817.1"/>
    </source>
</evidence>
<comment type="function">
    <text evidence="1">Catalyzes the transfer of galactose onto proteins or lipids. Required for susceptibility to pore-forming crystal toxins in conjunction with bre-1, bre-2 and bre-3 (By similarity).</text>
</comment>
<comment type="cofactor">
    <cofactor evidence="2">
        <name>Mn(2+)</name>
        <dbReference type="ChEBI" id="CHEBI:29035"/>
    </cofactor>
</comment>
<comment type="pathway">
    <text evidence="3">Protein modification; protein glycosylation.</text>
</comment>
<comment type="subcellular location">
    <subcellularLocation>
        <location evidence="4">Membrane</location>
        <topology evidence="4">Single-pass type II membrane protein</topology>
    </subcellularLocation>
</comment>
<comment type="similarity">
    <text evidence="4">Belongs to the glycosyltransferase 7 family.</text>
</comment>
<keyword id="KW-1015">Disulfide bond</keyword>
<keyword id="KW-0325">Glycoprotein</keyword>
<keyword id="KW-0328">Glycosyltransferase</keyword>
<keyword id="KW-0978">Insecticide resistance</keyword>
<keyword id="KW-0464">Manganese</keyword>
<keyword id="KW-0472">Membrane</keyword>
<keyword id="KW-0479">Metal-binding</keyword>
<keyword id="KW-1185">Reference proteome</keyword>
<keyword id="KW-0735">Signal-anchor</keyword>
<keyword id="KW-0808">Transferase</keyword>
<keyword id="KW-0812">Transmembrane</keyword>
<keyword id="KW-1133">Transmembrane helix</keyword>
<protein>
    <recommendedName>
        <fullName>Beta-1,4-N-acetylgalactosaminyltransferase bre-4</fullName>
        <ecNumber>2.4.1.-</ecNumber>
    </recommendedName>
    <alternativeName>
        <fullName>Bacillus thuringiensis toxin-resistant protein 4</fullName>
        <shortName>Bt toxin-resistant protein 4</shortName>
    </alternativeName>
    <alternativeName>
        <fullName>Beta-4-GalNAcT</fullName>
    </alternativeName>
</protein>
<organism>
    <name type="scientific">Caenorhabditis briggsae</name>
    <dbReference type="NCBI Taxonomy" id="6238"/>
    <lineage>
        <taxon>Eukaryota</taxon>
        <taxon>Metazoa</taxon>
        <taxon>Ecdysozoa</taxon>
        <taxon>Nematoda</taxon>
        <taxon>Chromadorea</taxon>
        <taxon>Rhabditida</taxon>
        <taxon>Rhabditina</taxon>
        <taxon>Rhabditomorpha</taxon>
        <taxon>Rhabditoidea</taxon>
        <taxon>Rhabditidae</taxon>
        <taxon>Peloderinae</taxon>
        <taxon>Caenorhabditis</taxon>
    </lineage>
</organism>
<gene>
    <name evidence="3" type="primary">bre-4</name>
    <name type="ORF">CBG22165</name>
</gene>
<accession>A8Y1P7</accession>